<name>AROC_HALSA</name>
<feature type="chain" id="PRO_0000140688" description="Chorismate synthase">
    <location>
        <begin position="1"/>
        <end position="394"/>
    </location>
</feature>
<feature type="region of interest" description="Disordered" evidence="2">
    <location>
        <begin position="52"/>
        <end position="90"/>
    </location>
</feature>
<feature type="compositionally biased region" description="Polar residues" evidence="2">
    <location>
        <begin position="66"/>
        <end position="79"/>
    </location>
</feature>
<feature type="binding site" evidence="1">
    <location>
        <position position="48"/>
    </location>
    <ligand>
        <name>NADP(+)</name>
        <dbReference type="ChEBI" id="CHEBI:58349"/>
    </ligand>
</feature>
<feature type="binding site" evidence="1">
    <location>
        <begin position="125"/>
        <end position="127"/>
    </location>
    <ligand>
        <name>FMN</name>
        <dbReference type="ChEBI" id="CHEBI:58210"/>
    </ligand>
</feature>
<feature type="binding site" evidence="1">
    <location>
        <position position="297"/>
    </location>
    <ligand>
        <name>FMN</name>
        <dbReference type="ChEBI" id="CHEBI:58210"/>
    </ligand>
</feature>
<feature type="binding site" evidence="1">
    <location>
        <begin position="312"/>
        <end position="316"/>
    </location>
    <ligand>
        <name>FMN</name>
        <dbReference type="ChEBI" id="CHEBI:58210"/>
    </ligand>
</feature>
<feature type="binding site" evidence="1">
    <location>
        <position position="339"/>
    </location>
    <ligand>
        <name>FMN</name>
        <dbReference type="ChEBI" id="CHEBI:58210"/>
    </ligand>
</feature>
<organism>
    <name type="scientific">Halobacterium salinarum (strain ATCC 700922 / JCM 11081 / NRC-1)</name>
    <name type="common">Halobacterium halobium</name>
    <dbReference type="NCBI Taxonomy" id="64091"/>
    <lineage>
        <taxon>Archaea</taxon>
        <taxon>Methanobacteriati</taxon>
        <taxon>Methanobacteriota</taxon>
        <taxon>Stenosarchaea group</taxon>
        <taxon>Halobacteria</taxon>
        <taxon>Halobacteriales</taxon>
        <taxon>Halobacteriaceae</taxon>
        <taxon>Halobacterium</taxon>
        <taxon>Halobacterium salinarum NRC-34001</taxon>
    </lineage>
</organism>
<protein>
    <recommendedName>
        <fullName evidence="1">Chorismate synthase</fullName>
        <shortName evidence="1">CS</shortName>
        <ecNumber evidence="1">4.2.3.5</ecNumber>
    </recommendedName>
    <alternativeName>
        <fullName evidence="1">5-enolpyruvylshikimate-3-phosphate phospholyase</fullName>
    </alternativeName>
</protein>
<accession>Q9HQC2</accession>
<dbReference type="EC" id="4.2.3.5" evidence="1"/>
<dbReference type="EMBL" id="AE004437">
    <property type="protein sequence ID" value="AAG19593.1"/>
    <property type="molecule type" value="Genomic_DNA"/>
</dbReference>
<dbReference type="PIR" id="E84278">
    <property type="entry name" value="E84278"/>
</dbReference>
<dbReference type="RefSeq" id="WP_010902889.1">
    <property type="nucleotide sequence ID" value="NC_002607.1"/>
</dbReference>
<dbReference type="SMR" id="Q9HQC2"/>
<dbReference type="FunCoup" id="Q9HQC2">
    <property type="interactions" value="119"/>
</dbReference>
<dbReference type="STRING" id="64091.VNG_1230G"/>
<dbReference type="PaxDb" id="64091-VNG_1230G"/>
<dbReference type="GeneID" id="68693994"/>
<dbReference type="KEGG" id="hal:VNG_1230G"/>
<dbReference type="PATRIC" id="fig|64091.14.peg.941"/>
<dbReference type="HOGENOM" id="CLU_034547_0_0_2"/>
<dbReference type="InParanoid" id="Q9HQC2"/>
<dbReference type="OrthoDB" id="33049at2157"/>
<dbReference type="PhylomeDB" id="Q9HQC2"/>
<dbReference type="UniPathway" id="UPA00053">
    <property type="reaction ID" value="UER00090"/>
</dbReference>
<dbReference type="Proteomes" id="UP000000554">
    <property type="component" value="Chromosome"/>
</dbReference>
<dbReference type="GO" id="GO:0005829">
    <property type="term" value="C:cytosol"/>
    <property type="evidence" value="ECO:0000318"/>
    <property type="project" value="GO_Central"/>
</dbReference>
<dbReference type="GO" id="GO:0004107">
    <property type="term" value="F:chorismate synthase activity"/>
    <property type="evidence" value="ECO:0000318"/>
    <property type="project" value="GO_Central"/>
</dbReference>
<dbReference type="GO" id="GO:0010181">
    <property type="term" value="F:FMN binding"/>
    <property type="evidence" value="ECO:0000318"/>
    <property type="project" value="GO_Central"/>
</dbReference>
<dbReference type="GO" id="GO:0008652">
    <property type="term" value="P:amino acid biosynthetic process"/>
    <property type="evidence" value="ECO:0007669"/>
    <property type="project" value="UniProtKB-KW"/>
</dbReference>
<dbReference type="GO" id="GO:0009073">
    <property type="term" value="P:aromatic amino acid family biosynthetic process"/>
    <property type="evidence" value="ECO:0000318"/>
    <property type="project" value="GO_Central"/>
</dbReference>
<dbReference type="GO" id="GO:0009423">
    <property type="term" value="P:chorismate biosynthetic process"/>
    <property type="evidence" value="ECO:0000318"/>
    <property type="project" value="GO_Central"/>
</dbReference>
<dbReference type="CDD" id="cd07304">
    <property type="entry name" value="Chorismate_synthase"/>
    <property type="match status" value="1"/>
</dbReference>
<dbReference type="Gene3D" id="3.60.150.10">
    <property type="entry name" value="Chorismate synthase AroC"/>
    <property type="match status" value="1"/>
</dbReference>
<dbReference type="HAMAP" id="MF_00300">
    <property type="entry name" value="Chorismate_synth"/>
    <property type="match status" value="1"/>
</dbReference>
<dbReference type="InterPro" id="IPR000453">
    <property type="entry name" value="Chorismate_synth"/>
</dbReference>
<dbReference type="InterPro" id="IPR035904">
    <property type="entry name" value="Chorismate_synth_AroC_sf"/>
</dbReference>
<dbReference type="InterPro" id="IPR020541">
    <property type="entry name" value="Chorismate_synthase_CS"/>
</dbReference>
<dbReference type="NCBIfam" id="TIGR00033">
    <property type="entry name" value="aroC"/>
    <property type="match status" value="1"/>
</dbReference>
<dbReference type="NCBIfam" id="NF003793">
    <property type="entry name" value="PRK05382.1"/>
    <property type="match status" value="1"/>
</dbReference>
<dbReference type="PANTHER" id="PTHR21085">
    <property type="entry name" value="CHORISMATE SYNTHASE"/>
    <property type="match status" value="1"/>
</dbReference>
<dbReference type="PANTHER" id="PTHR21085:SF0">
    <property type="entry name" value="CHORISMATE SYNTHASE"/>
    <property type="match status" value="1"/>
</dbReference>
<dbReference type="Pfam" id="PF01264">
    <property type="entry name" value="Chorismate_synt"/>
    <property type="match status" value="1"/>
</dbReference>
<dbReference type="PIRSF" id="PIRSF001456">
    <property type="entry name" value="Chorismate_synth"/>
    <property type="match status" value="1"/>
</dbReference>
<dbReference type="SUPFAM" id="SSF103263">
    <property type="entry name" value="Chorismate synthase, AroC"/>
    <property type="match status" value="1"/>
</dbReference>
<dbReference type="PROSITE" id="PS00787">
    <property type="entry name" value="CHORISMATE_SYNTHASE_1"/>
    <property type="match status" value="1"/>
</dbReference>
<dbReference type="PROSITE" id="PS00788">
    <property type="entry name" value="CHORISMATE_SYNTHASE_2"/>
    <property type="match status" value="1"/>
</dbReference>
<dbReference type="PROSITE" id="PS00789">
    <property type="entry name" value="CHORISMATE_SYNTHASE_3"/>
    <property type="match status" value="1"/>
</dbReference>
<keyword id="KW-0028">Amino-acid biosynthesis</keyword>
<keyword id="KW-0057">Aromatic amino acid biosynthesis</keyword>
<keyword id="KW-0274">FAD</keyword>
<keyword id="KW-0285">Flavoprotein</keyword>
<keyword id="KW-0288">FMN</keyword>
<keyword id="KW-0456">Lyase</keyword>
<keyword id="KW-0521">NADP</keyword>
<keyword id="KW-1185">Reference proteome</keyword>
<proteinExistence type="inferred from homology"/>
<reference key="1">
    <citation type="journal article" date="2000" name="Proc. Natl. Acad. Sci. U.S.A.">
        <title>Genome sequence of Halobacterium species NRC-1.</title>
        <authorList>
            <person name="Ng W.V."/>
            <person name="Kennedy S.P."/>
            <person name="Mahairas G.G."/>
            <person name="Berquist B."/>
            <person name="Pan M."/>
            <person name="Shukla H.D."/>
            <person name="Lasky S.R."/>
            <person name="Baliga N.S."/>
            <person name="Thorsson V."/>
            <person name="Sbrogna J."/>
            <person name="Swartzell S."/>
            <person name="Weir D."/>
            <person name="Hall J."/>
            <person name="Dahl T.A."/>
            <person name="Welti R."/>
            <person name="Goo Y.A."/>
            <person name="Leithauser B."/>
            <person name="Keller K."/>
            <person name="Cruz R."/>
            <person name="Danson M.J."/>
            <person name="Hough D.W."/>
            <person name="Maddocks D.G."/>
            <person name="Jablonski P.E."/>
            <person name="Krebs M.P."/>
            <person name="Angevine C.M."/>
            <person name="Dale H."/>
            <person name="Isenbarger T.A."/>
            <person name="Peck R.F."/>
            <person name="Pohlschroder M."/>
            <person name="Spudich J.L."/>
            <person name="Jung K.-H."/>
            <person name="Alam M."/>
            <person name="Freitas T."/>
            <person name="Hou S."/>
            <person name="Daniels C.J."/>
            <person name="Dennis P.P."/>
            <person name="Omer A.D."/>
            <person name="Ebhardt H."/>
            <person name="Lowe T.M."/>
            <person name="Liang P."/>
            <person name="Riley M."/>
            <person name="Hood L."/>
            <person name="DasSarma S."/>
        </authorList>
    </citation>
    <scope>NUCLEOTIDE SEQUENCE [LARGE SCALE GENOMIC DNA]</scope>
    <source>
        <strain>ATCC 700922 / JCM 11081 / NRC-1</strain>
    </source>
</reference>
<comment type="function">
    <text evidence="1">Catalyzes the anti-1,4-elimination of the C-3 phosphate and the C-6 proR hydrogen from 5-enolpyruvylshikimate-3-phosphate (EPSP) to yield chorismate, which is the branch point compound that serves as the starting substrate for the three terminal pathways of aromatic amino acid biosynthesis. This reaction introduces a second double bond into the aromatic ring system.</text>
</comment>
<comment type="catalytic activity">
    <reaction evidence="1">
        <text>5-O-(1-carboxyvinyl)-3-phosphoshikimate = chorismate + phosphate</text>
        <dbReference type="Rhea" id="RHEA:21020"/>
        <dbReference type="ChEBI" id="CHEBI:29748"/>
        <dbReference type="ChEBI" id="CHEBI:43474"/>
        <dbReference type="ChEBI" id="CHEBI:57701"/>
        <dbReference type="EC" id="4.2.3.5"/>
    </reaction>
</comment>
<comment type="cofactor">
    <cofactor evidence="1">
        <name>FMNH2</name>
        <dbReference type="ChEBI" id="CHEBI:57618"/>
    </cofactor>
    <text evidence="1">Reduced FMN (FMNH(2)).</text>
</comment>
<comment type="pathway">
    <text evidence="1">Metabolic intermediate biosynthesis; chorismate biosynthesis; chorismate from D-erythrose 4-phosphate and phosphoenolpyruvate: step 7/7.</text>
</comment>
<comment type="similarity">
    <text evidence="1">Belongs to the chorismate synthase family.</text>
</comment>
<sequence>MNGNRFGRLFEVTTYGESHGPGMGVVVSGCPAGVALDERMIQDELDRRKPGQSMITTSRGEPDEVSIQSGLQDGYTTGTPIGMTIENKDAESGKYEPFVTAPRPSHGDYTYSAKFGTRNWGGGGRSSARETVNWVAAGAVAKAVLAQSDHDVRVKAHVNQIGEIEAPDVSFEDIREHSEDNEVRCADPETAERMRALIDDYQERGDSIGGSIYFEARGVPRGLGAPRFDSVPARLGQALFAIPATTSVEFGLGRDARSVAGKQRNEDWTVADGDEDHVVADEGDPIPAGNDHGGLQGGITTGEPIYGEASWHAPTSIPKTQATVDWETGEEKAVTVTGRHDPSLPPRAVPVVEAMLYCTILDFMLLGGRINPDRLDGHPGQYDTDYHPSSPRNE</sequence>
<evidence type="ECO:0000255" key="1">
    <source>
        <dbReference type="HAMAP-Rule" id="MF_00300"/>
    </source>
</evidence>
<evidence type="ECO:0000256" key="2">
    <source>
        <dbReference type="SAM" id="MobiDB-lite"/>
    </source>
</evidence>
<gene>
    <name evidence="1" type="primary">aroC</name>
    <name type="ordered locus">VNG_1230G</name>
</gene>